<keyword id="KW-0479">Metal-binding</keyword>
<keyword id="KW-1185">Reference proteome</keyword>
<keyword id="KW-0677">Repeat</keyword>
<keyword id="KW-0808">Transferase</keyword>
<keyword id="KW-0833">Ubl conjugation pathway</keyword>
<keyword id="KW-0862">Zinc</keyword>
<keyword id="KW-0863">Zinc-finger</keyword>
<comment type="function">
    <text evidence="4">Might act as an E3 ubiquitin-protein ligase. Appears to be required for normal cell-type proportioning and cell sorting during multicellular development. In addition to being necessary for a normal percentage of prestalk cells and the organization of the slug, rbrA is also necessary for spore cell viability.</text>
</comment>
<comment type="catalytic activity">
    <reaction evidence="1">
        <text>[E2 ubiquitin-conjugating enzyme]-S-ubiquitinyl-L-cysteine + [acceptor protein]-L-lysine = [E2 ubiquitin-conjugating enzyme]-L-cysteine + [acceptor protein]-N(6)-ubiquitinyl-L-lysine.</text>
        <dbReference type="EC" id="2.3.2.31"/>
    </reaction>
</comment>
<comment type="pathway">
    <text>Protein modification; protein ubiquitination.</text>
</comment>
<comment type="domain">
    <text evidence="1">Members of the RBR family are atypical E3 ligases. They interact with the E2 conjugating enzyme UBE2L3 and function like HECT-type E3 enzymes: they bind E2s via the first RING domain, but require an obligate trans-thiolation step during the ubiquitin transfer, requiring a conserved cysteine residue in the second RING domain.</text>
</comment>
<comment type="disruption phenotype">
    <text evidence="4">Prestalk cell numbers are reduced in slugs and these prestalk cells do not localize to the tip of slugs. Development terminates at the finger or slug stage, and these slugs do not phototax, possibly because the tip region does not properly form.</text>
</comment>
<comment type="similarity">
    <text evidence="5">Belongs to the RBR family.</text>
</comment>
<reference key="1">
    <citation type="journal article" date="2006" name="Eukaryot. Cell">
        <title>A putative Ariadne-like ubiquitin ligase is required for Dictyostelium discoideum development.</title>
        <authorList>
            <person name="Whitney N."/>
            <person name="Pearson L.J."/>
            <person name="Lunsford R."/>
            <person name="McGill L."/>
            <person name="Gomer R.H."/>
            <person name="Lindsey D.F."/>
        </authorList>
    </citation>
    <scope>NUCLEOTIDE SEQUENCE [GENOMIC DNA]</scope>
    <scope>FUNCTION</scope>
    <scope>DISRUPTION PHENOTYPE</scope>
</reference>
<reference key="2">
    <citation type="journal article" date="2005" name="Nature">
        <title>The genome of the social amoeba Dictyostelium discoideum.</title>
        <authorList>
            <person name="Eichinger L."/>
            <person name="Pachebat J.A."/>
            <person name="Gloeckner G."/>
            <person name="Rajandream M.A."/>
            <person name="Sucgang R."/>
            <person name="Berriman M."/>
            <person name="Song J."/>
            <person name="Olsen R."/>
            <person name="Szafranski K."/>
            <person name="Xu Q."/>
            <person name="Tunggal B."/>
            <person name="Kummerfeld S."/>
            <person name="Madera M."/>
            <person name="Konfortov B.A."/>
            <person name="Rivero F."/>
            <person name="Bankier A.T."/>
            <person name="Lehmann R."/>
            <person name="Hamlin N."/>
            <person name="Davies R."/>
            <person name="Gaudet P."/>
            <person name="Fey P."/>
            <person name="Pilcher K."/>
            <person name="Chen G."/>
            <person name="Saunders D."/>
            <person name="Sodergren E.J."/>
            <person name="Davis P."/>
            <person name="Kerhornou A."/>
            <person name="Nie X."/>
            <person name="Hall N."/>
            <person name="Anjard C."/>
            <person name="Hemphill L."/>
            <person name="Bason N."/>
            <person name="Farbrother P."/>
            <person name="Desany B."/>
            <person name="Just E."/>
            <person name="Morio T."/>
            <person name="Rost R."/>
            <person name="Churcher C.M."/>
            <person name="Cooper J."/>
            <person name="Haydock S."/>
            <person name="van Driessche N."/>
            <person name="Cronin A."/>
            <person name="Goodhead I."/>
            <person name="Muzny D.M."/>
            <person name="Mourier T."/>
            <person name="Pain A."/>
            <person name="Lu M."/>
            <person name="Harper D."/>
            <person name="Lindsay R."/>
            <person name="Hauser H."/>
            <person name="James K.D."/>
            <person name="Quiles M."/>
            <person name="Madan Babu M."/>
            <person name="Saito T."/>
            <person name="Buchrieser C."/>
            <person name="Wardroper A."/>
            <person name="Felder M."/>
            <person name="Thangavelu M."/>
            <person name="Johnson D."/>
            <person name="Knights A."/>
            <person name="Loulseged H."/>
            <person name="Mungall K.L."/>
            <person name="Oliver K."/>
            <person name="Price C."/>
            <person name="Quail M.A."/>
            <person name="Urushihara H."/>
            <person name="Hernandez J."/>
            <person name="Rabbinowitsch E."/>
            <person name="Steffen D."/>
            <person name="Sanders M."/>
            <person name="Ma J."/>
            <person name="Kohara Y."/>
            <person name="Sharp S."/>
            <person name="Simmonds M.N."/>
            <person name="Spiegler S."/>
            <person name="Tivey A."/>
            <person name="Sugano S."/>
            <person name="White B."/>
            <person name="Walker D."/>
            <person name="Woodward J.R."/>
            <person name="Winckler T."/>
            <person name="Tanaka Y."/>
            <person name="Shaulsky G."/>
            <person name="Schleicher M."/>
            <person name="Weinstock G.M."/>
            <person name="Rosenthal A."/>
            <person name="Cox E.C."/>
            <person name="Chisholm R.L."/>
            <person name="Gibbs R.A."/>
            <person name="Loomis W.F."/>
            <person name="Platzer M."/>
            <person name="Kay R.R."/>
            <person name="Williams J.G."/>
            <person name="Dear P.H."/>
            <person name="Noegel A.A."/>
            <person name="Barrell B.G."/>
            <person name="Kuspa A."/>
        </authorList>
    </citation>
    <scope>NUCLEOTIDE SEQUENCE [LARGE SCALE GENOMIC DNA]</scope>
    <source>
        <strain>AX4</strain>
    </source>
</reference>
<proteinExistence type="inferred from homology"/>
<sequence length="520" mass="60553">MTDDEMYEDYDVDDDSAEESGNESLDDTEYDDAATQEFDFDENQPQRSLGKLTRQKSFEVLNKDDLFSESHKIIKEVKDVLSIPSEAAVSTLLRHMKWNKEKLIERYMENPEKLCIDAGVPNVMKLNATIVEKSGNVSCLICLEDYPPTQTFALICNHRYCLPCYKNYLEIKVSEGPECIYTPCPAPKCKVIVHQDAFKQIVSPEVFERFNNFILKSYVDDNPQVKWCPAPGCIYSIRCDRKERKEAVNCKCGFQYCFNCNDYEIGDHMPCPCSQVDKWLQKASDESENVTWMLANTKKCPECRSPIEKNGGCMHMTCRKNAGGCGFEFCWLCRGPWTEHGSTTGGYYNCNKYDKSKAKEDDDKAHDAKTELEAYMFYYHRYESHRNAMKIADEQRRNAHLKEQQILSKFDVRSADTKFLMEATEQLLKNRRVLQYSYVYGYYLDKKSQERNLFEYLQEDLEKHTNLLSTQYEQSLDKLEDYQAFIKWKEQVTNYTRITKKFLDNFVDGVAGGLVNTQIN</sequence>
<organism>
    <name type="scientific">Dictyostelium discoideum</name>
    <name type="common">Social amoeba</name>
    <dbReference type="NCBI Taxonomy" id="44689"/>
    <lineage>
        <taxon>Eukaryota</taxon>
        <taxon>Amoebozoa</taxon>
        <taxon>Evosea</taxon>
        <taxon>Eumycetozoa</taxon>
        <taxon>Dictyostelia</taxon>
        <taxon>Dictyosteliales</taxon>
        <taxon>Dictyosteliaceae</taxon>
        <taxon>Dictyostelium</taxon>
    </lineage>
</organism>
<dbReference type="EC" id="2.3.2.31" evidence="1"/>
<dbReference type="EMBL" id="AY437441">
    <property type="protein sequence ID" value="AAR10851.1"/>
    <property type="molecule type" value="Genomic_DNA"/>
</dbReference>
<dbReference type="EMBL" id="AAFI02000092">
    <property type="protein sequence ID" value="EAL63978.1"/>
    <property type="molecule type" value="Genomic_DNA"/>
</dbReference>
<dbReference type="RefSeq" id="XP_637482.1">
    <property type="nucleotide sequence ID" value="XM_632390.1"/>
</dbReference>
<dbReference type="SMR" id="Q6T486"/>
<dbReference type="FunCoup" id="Q6T486">
    <property type="interactions" value="30"/>
</dbReference>
<dbReference type="STRING" id="44689.Q6T486"/>
<dbReference type="PaxDb" id="44689-DDB0191418"/>
<dbReference type="EnsemblProtists" id="EAL63978">
    <property type="protein sequence ID" value="EAL63978"/>
    <property type="gene ID" value="DDB_G0286961"/>
</dbReference>
<dbReference type="GeneID" id="8625881"/>
<dbReference type="KEGG" id="ddi:DDB_G0286961"/>
<dbReference type="dictyBase" id="DDB_G0286961">
    <property type="gene designation" value="rbrA"/>
</dbReference>
<dbReference type="VEuPathDB" id="AmoebaDB:DDB_G0286961"/>
<dbReference type="eggNOG" id="KOG1815">
    <property type="taxonomic scope" value="Eukaryota"/>
</dbReference>
<dbReference type="HOGENOM" id="CLU_009823_3_1_1"/>
<dbReference type="InParanoid" id="Q6T486"/>
<dbReference type="OMA" id="HRFCMIC"/>
<dbReference type="PhylomeDB" id="Q6T486"/>
<dbReference type="Reactome" id="R-DDI-5675482">
    <property type="pathway name" value="Regulation of necroptotic cell death"/>
</dbReference>
<dbReference type="Reactome" id="R-DDI-5689877">
    <property type="pathway name" value="Josephin domain DUBs"/>
</dbReference>
<dbReference type="Reactome" id="R-DDI-9646399">
    <property type="pathway name" value="Aggrephagy"/>
</dbReference>
<dbReference type="Reactome" id="R-DDI-983168">
    <property type="pathway name" value="Antigen processing: Ubiquitination &amp; Proteasome degradation"/>
</dbReference>
<dbReference type="UniPathway" id="UPA00143"/>
<dbReference type="PRO" id="PR:Q6T486"/>
<dbReference type="Proteomes" id="UP000002195">
    <property type="component" value="Chromosome 4"/>
</dbReference>
<dbReference type="GO" id="GO:0005737">
    <property type="term" value="C:cytoplasm"/>
    <property type="evidence" value="ECO:0000318"/>
    <property type="project" value="GO_Central"/>
</dbReference>
<dbReference type="GO" id="GO:0000151">
    <property type="term" value="C:ubiquitin ligase complex"/>
    <property type="evidence" value="ECO:0000318"/>
    <property type="project" value="GO_Central"/>
</dbReference>
<dbReference type="GO" id="GO:0031624">
    <property type="term" value="F:ubiquitin conjugating enzyme binding"/>
    <property type="evidence" value="ECO:0000318"/>
    <property type="project" value="GO_Central"/>
</dbReference>
<dbReference type="GO" id="GO:0061630">
    <property type="term" value="F:ubiquitin protein ligase activity"/>
    <property type="evidence" value="ECO:0000318"/>
    <property type="project" value="GO_Central"/>
</dbReference>
<dbReference type="GO" id="GO:0008270">
    <property type="term" value="F:zinc ion binding"/>
    <property type="evidence" value="ECO:0007669"/>
    <property type="project" value="UniProtKB-KW"/>
</dbReference>
<dbReference type="GO" id="GO:0016567">
    <property type="term" value="P:protein ubiquitination"/>
    <property type="evidence" value="ECO:0007669"/>
    <property type="project" value="UniProtKB-UniPathway"/>
</dbReference>
<dbReference type="GO" id="GO:0031149">
    <property type="term" value="P:sorocarp stalk cell differentiation"/>
    <property type="evidence" value="ECO:0000315"/>
    <property type="project" value="dictyBase"/>
</dbReference>
<dbReference type="GO" id="GO:0030435">
    <property type="term" value="P:sporulation resulting in formation of a cellular spore"/>
    <property type="evidence" value="ECO:0000315"/>
    <property type="project" value="dictyBase"/>
</dbReference>
<dbReference type="GO" id="GO:0006511">
    <property type="term" value="P:ubiquitin-dependent protein catabolic process"/>
    <property type="evidence" value="ECO:0000318"/>
    <property type="project" value="GO_Central"/>
</dbReference>
<dbReference type="CDD" id="cd20346">
    <property type="entry name" value="BRcat_RBR_ANKIB1"/>
    <property type="match status" value="1"/>
</dbReference>
<dbReference type="CDD" id="cd22583">
    <property type="entry name" value="Rcat_RBR_ARI7-like"/>
    <property type="match status" value="1"/>
</dbReference>
<dbReference type="CDD" id="cd16773">
    <property type="entry name" value="RING-HC_RBR_TRIAD1"/>
    <property type="match status" value="1"/>
</dbReference>
<dbReference type="FunFam" id="1.20.120.1750:FF:000022">
    <property type="entry name" value="RBR-type E3 ubiquitin transferase"/>
    <property type="match status" value="1"/>
</dbReference>
<dbReference type="FunFam" id="3.30.40.10:FF:000019">
    <property type="entry name" value="RBR-type E3 ubiquitin transferase"/>
    <property type="match status" value="1"/>
</dbReference>
<dbReference type="Gene3D" id="1.20.120.1750">
    <property type="match status" value="1"/>
</dbReference>
<dbReference type="Gene3D" id="3.30.40.10">
    <property type="entry name" value="Zinc/RING finger domain, C3HC4 (zinc finger)"/>
    <property type="match status" value="1"/>
</dbReference>
<dbReference type="InterPro" id="IPR045840">
    <property type="entry name" value="Ariadne"/>
</dbReference>
<dbReference type="InterPro" id="IPR048962">
    <property type="entry name" value="ARIH1-like_UBL"/>
</dbReference>
<dbReference type="InterPro" id="IPR031127">
    <property type="entry name" value="E3_UB_ligase_RBR"/>
</dbReference>
<dbReference type="InterPro" id="IPR002867">
    <property type="entry name" value="IBR_dom"/>
</dbReference>
<dbReference type="InterPro" id="IPR054694">
    <property type="entry name" value="Parkin-like_IBR"/>
</dbReference>
<dbReference type="InterPro" id="IPR044066">
    <property type="entry name" value="TRIAD_supradom"/>
</dbReference>
<dbReference type="InterPro" id="IPR001841">
    <property type="entry name" value="Znf_RING"/>
</dbReference>
<dbReference type="InterPro" id="IPR013083">
    <property type="entry name" value="Znf_RING/FYVE/PHD"/>
</dbReference>
<dbReference type="InterPro" id="IPR017907">
    <property type="entry name" value="Znf_RING_CS"/>
</dbReference>
<dbReference type="PANTHER" id="PTHR11685">
    <property type="entry name" value="RBR FAMILY RING FINGER AND IBR DOMAIN-CONTAINING"/>
    <property type="match status" value="1"/>
</dbReference>
<dbReference type="Pfam" id="PF19422">
    <property type="entry name" value="Ariadne"/>
    <property type="match status" value="1"/>
</dbReference>
<dbReference type="Pfam" id="PF01485">
    <property type="entry name" value="IBR"/>
    <property type="match status" value="1"/>
</dbReference>
<dbReference type="Pfam" id="PF22605">
    <property type="entry name" value="IBR_2"/>
    <property type="match status" value="1"/>
</dbReference>
<dbReference type="Pfam" id="PF21235">
    <property type="entry name" value="UBA_ARI1"/>
    <property type="match status" value="1"/>
</dbReference>
<dbReference type="SMART" id="SM00647">
    <property type="entry name" value="IBR"/>
    <property type="match status" value="2"/>
</dbReference>
<dbReference type="SUPFAM" id="SSF57850">
    <property type="entry name" value="RING/U-box"/>
    <property type="match status" value="3"/>
</dbReference>
<dbReference type="PROSITE" id="PS51873">
    <property type="entry name" value="TRIAD"/>
    <property type="match status" value="1"/>
</dbReference>
<dbReference type="PROSITE" id="PS00518">
    <property type="entry name" value="ZF_RING_1"/>
    <property type="match status" value="1"/>
</dbReference>
<dbReference type="PROSITE" id="PS50089">
    <property type="entry name" value="ZF_RING_2"/>
    <property type="match status" value="1"/>
</dbReference>
<gene>
    <name type="primary">rbrA</name>
    <name type="ORF">DDB_G0286961</name>
</gene>
<accession>Q6T486</accession>
<accession>Q54L21</accession>
<feature type="chain" id="PRO_0000330478" description="Probable E3 ubiquitin-protein ligase rbrA">
    <location>
        <begin position="1"/>
        <end position="520"/>
    </location>
</feature>
<feature type="zinc finger region" description="RING-type 1" evidence="2">
    <location>
        <begin position="139"/>
        <end position="189"/>
    </location>
</feature>
<feature type="zinc finger region" description="IBR-type" evidence="2">
    <location>
        <begin position="208"/>
        <end position="273"/>
    </location>
</feature>
<feature type="zinc finger region" description="RING-type 2; atypical" evidence="2">
    <location>
        <begin position="300"/>
        <end position="333"/>
    </location>
</feature>
<feature type="region of interest" description="Disordered" evidence="3">
    <location>
        <begin position="1"/>
        <end position="51"/>
    </location>
</feature>
<feature type="region of interest" description="TRIAD supradomain" evidence="2">
    <location>
        <begin position="135"/>
        <end position="354"/>
    </location>
</feature>
<feature type="compositionally biased region" description="Acidic residues" evidence="3">
    <location>
        <begin position="1"/>
        <end position="42"/>
    </location>
</feature>
<feature type="active site" evidence="2">
    <location>
        <position position="313"/>
    </location>
</feature>
<feature type="binding site" evidence="2">
    <location>
        <position position="139"/>
    </location>
    <ligand>
        <name>Zn(2+)</name>
        <dbReference type="ChEBI" id="CHEBI:29105"/>
        <label>1</label>
    </ligand>
</feature>
<feature type="binding site" evidence="2">
    <location>
        <position position="142"/>
    </location>
    <ligand>
        <name>Zn(2+)</name>
        <dbReference type="ChEBI" id="CHEBI:29105"/>
        <label>1</label>
    </ligand>
</feature>
<feature type="binding site" evidence="2">
    <location>
        <position position="156"/>
    </location>
    <ligand>
        <name>Zn(2+)</name>
        <dbReference type="ChEBI" id="CHEBI:29105"/>
        <label>2</label>
    </ligand>
</feature>
<feature type="binding site" evidence="2">
    <location>
        <position position="158"/>
    </location>
    <ligand>
        <name>Zn(2+)</name>
        <dbReference type="ChEBI" id="CHEBI:29105"/>
        <label>2</label>
    </ligand>
</feature>
<feature type="binding site" evidence="2">
    <location>
        <position position="161"/>
    </location>
    <ligand>
        <name>Zn(2+)</name>
        <dbReference type="ChEBI" id="CHEBI:29105"/>
        <label>1</label>
    </ligand>
</feature>
<feature type="binding site" evidence="2">
    <location>
        <position position="164"/>
    </location>
    <ligand>
        <name>Zn(2+)</name>
        <dbReference type="ChEBI" id="CHEBI:29105"/>
        <label>1</label>
    </ligand>
</feature>
<feature type="binding site" evidence="2">
    <location>
        <position position="184"/>
    </location>
    <ligand>
        <name>Zn(2+)</name>
        <dbReference type="ChEBI" id="CHEBI:29105"/>
        <label>2</label>
    </ligand>
</feature>
<feature type="binding site" evidence="2">
    <location>
        <position position="189"/>
    </location>
    <ligand>
        <name>Zn(2+)</name>
        <dbReference type="ChEBI" id="CHEBI:29105"/>
        <label>2</label>
    </ligand>
</feature>
<feature type="binding site" evidence="2">
    <location>
        <position position="228"/>
    </location>
    <ligand>
        <name>Zn(2+)</name>
        <dbReference type="ChEBI" id="CHEBI:29105"/>
        <label>3</label>
    </ligand>
</feature>
<feature type="binding site" evidence="2">
    <location>
        <position position="233"/>
    </location>
    <ligand>
        <name>Zn(2+)</name>
        <dbReference type="ChEBI" id="CHEBI:29105"/>
        <label>3</label>
    </ligand>
</feature>
<feature type="binding site" evidence="2">
    <location>
        <position position="250"/>
    </location>
    <ligand>
        <name>Zn(2+)</name>
        <dbReference type="ChEBI" id="CHEBI:29105"/>
        <label>3</label>
    </ligand>
</feature>
<feature type="binding site" evidence="2">
    <location>
        <position position="252"/>
    </location>
    <ligand>
        <name>Zn(2+)</name>
        <dbReference type="ChEBI" id="CHEBI:29105"/>
        <label>3</label>
    </ligand>
</feature>
<feature type="binding site" evidence="2">
    <location>
        <position position="257"/>
    </location>
    <ligand>
        <name>Zn(2+)</name>
        <dbReference type="ChEBI" id="CHEBI:29105"/>
        <label>4</label>
    </ligand>
</feature>
<feature type="binding site" evidence="2">
    <location>
        <position position="260"/>
    </location>
    <ligand>
        <name>Zn(2+)</name>
        <dbReference type="ChEBI" id="CHEBI:29105"/>
        <label>4</label>
    </ligand>
</feature>
<feature type="binding site" evidence="2">
    <location>
        <position position="268"/>
    </location>
    <ligand>
        <name>Zn(2+)</name>
        <dbReference type="ChEBI" id="CHEBI:29105"/>
        <label>4</label>
    </ligand>
</feature>
<feature type="binding site" evidence="2">
    <location>
        <position position="273"/>
    </location>
    <ligand>
        <name>Zn(2+)</name>
        <dbReference type="ChEBI" id="CHEBI:29105"/>
        <label>4</label>
    </ligand>
</feature>
<feature type="binding site" evidence="2">
    <location>
        <position position="300"/>
    </location>
    <ligand>
        <name>Zn(2+)</name>
        <dbReference type="ChEBI" id="CHEBI:29105"/>
        <label>5</label>
    </ligand>
</feature>
<feature type="binding site" evidence="2">
    <location>
        <position position="303"/>
    </location>
    <ligand>
        <name>Zn(2+)</name>
        <dbReference type="ChEBI" id="CHEBI:29105"/>
        <label>5</label>
    </ligand>
</feature>
<feature type="binding site" evidence="2">
    <location>
        <position position="318"/>
    </location>
    <ligand>
        <name>Zn(2+)</name>
        <dbReference type="ChEBI" id="CHEBI:29105"/>
        <label>5</label>
    </ligand>
</feature>
<feature type="binding site" evidence="2">
    <location>
        <position position="325"/>
    </location>
    <ligand>
        <name>Zn(2+)</name>
        <dbReference type="ChEBI" id="CHEBI:29105"/>
        <label>5</label>
    </ligand>
</feature>
<feature type="binding site" evidence="2">
    <location>
        <position position="330"/>
    </location>
    <ligand>
        <name>Zn(2+)</name>
        <dbReference type="ChEBI" id="CHEBI:29105"/>
        <label>6</label>
    </ligand>
</feature>
<feature type="binding site" evidence="2">
    <location>
        <position position="333"/>
    </location>
    <ligand>
        <name>Zn(2+)</name>
        <dbReference type="ChEBI" id="CHEBI:29105"/>
        <label>6</label>
    </ligand>
</feature>
<feature type="binding site" evidence="2">
    <location>
        <position position="340"/>
    </location>
    <ligand>
        <name>Zn(2+)</name>
        <dbReference type="ChEBI" id="CHEBI:29105"/>
        <label>6</label>
    </ligand>
</feature>
<feature type="binding site" evidence="2">
    <location>
        <position position="350"/>
    </location>
    <ligand>
        <name>Zn(2+)</name>
        <dbReference type="ChEBI" id="CHEBI:29105"/>
        <label>6</label>
    </ligand>
</feature>
<protein>
    <recommendedName>
        <fullName>Probable E3 ubiquitin-protein ligase rbrA</fullName>
        <ecNumber evidence="1">2.3.2.31</ecNumber>
    </recommendedName>
    <alternativeName>
        <fullName>Ariadne-like ubiquitin ligase</fullName>
    </alternativeName>
</protein>
<evidence type="ECO:0000250" key="1">
    <source>
        <dbReference type="UniProtKB" id="O60260"/>
    </source>
</evidence>
<evidence type="ECO:0000255" key="2">
    <source>
        <dbReference type="PROSITE-ProRule" id="PRU01221"/>
    </source>
</evidence>
<evidence type="ECO:0000256" key="3">
    <source>
        <dbReference type="SAM" id="MobiDB-lite"/>
    </source>
</evidence>
<evidence type="ECO:0000269" key="4">
    <source>
    </source>
</evidence>
<evidence type="ECO:0000305" key="5"/>
<name>RBRA_DICDI</name>